<protein>
    <recommendedName>
        <fullName evidence="1">UPF0060 membrane protein SAB2216c</fullName>
    </recommendedName>
</protein>
<name>Y2216_STAAB</name>
<reference key="1">
    <citation type="journal article" date="2007" name="PLoS ONE">
        <title>Molecular correlates of host specialization in Staphylococcus aureus.</title>
        <authorList>
            <person name="Herron-Olson L."/>
            <person name="Fitzgerald J.R."/>
            <person name="Musser J.M."/>
            <person name="Kapur V."/>
        </authorList>
    </citation>
    <scope>NUCLEOTIDE SEQUENCE [LARGE SCALE GENOMIC DNA]</scope>
    <source>
        <strain>bovine RF122 / ET3-1</strain>
    </source>
</reference>
<dbReference type="EMBL" id="AJ938182">
    <property type="protein sequence ID" value="CAI81905.1"/>
    <property type="molecule type" value="Genomic_DNA"/>
</dbReference>
<dbReference type="RefSeq" id="WP_000966692.1">
    <property type="nucleotide sequence ID" value="NC_007622.1"/>
</dbReference>
<dbReference type="SMR" id="Q2YYZ8"/>
<dbReference type="KEGG" id="sab:SAB2216c"/>
<dbReference type="HOGENOM" id="CLU_117653_0_1_9"/>
<dbReference type="GO" id="GO:0005886">
    <property type="term" value="C:plasma membrane"/>
    <property type="evidence" value="ECO:0007669"/>
    <property type="project" value="UniProtKB-SubCell"/>
</dbReference>
<dbReference type="HAMAP" id="MF_00010">
    <property type="entry name" value="UPF0060"/>
    <property type="match status" value="1"/>
</dbReference>
<dbReference type="InterPro" id="IPR003844">
    <property type="entry name" value="UPF0060"/>
</dbReference>
<dbReference type="NCBIfam" id="NF002586">
    <property type="entry name" value="PRK02237.1"/>
    <property type="match status" value="1"/>
</dbReference>
<dbReference type="PANTHER" id="PTHR36116">
    <property type="entry name" value="UPF0060 MEMBRANE PROTEIN YNFA"/>
    <property type="match status" value="1"/>
</dbReference>
<dbReference type="PANTHER" id="PTHR36116:SF1">
    <property type="entry name" value="UPF0060 MEMBRANE PROTEIN YNFA"/>
    <property type="match status" value="1"/>
</dbReference>
<dbReference type="Pfam" id="PF02694">
    <property type="entry name" value="UPF0060"/>
    <property type="match status" value="1"/>
</dbReference>
<dbReference type="SUPFAM" id="SSF103481">
    <property type="entry name" value="Multidrug resistance efflux transporter EmrE"/>
    <property type="match status" value="1"/>
</dbReference>
<proteinExistence type="inferred from homology"/>
<feature type="chain" id="PRO_0000282269" description="UPF0060 membrane protein SAB2216c">
    <location>
        <begin position="1"/>
        <end position="108"/>
    </location>
</feature>
<feature type="transmembrane region" description="Helical" evidence="1">
    <location>
        <begin position="5"/>
        <end position="25"/>
    </location>
</feature>
<feature type="transmembrane region" description="Helical" evidence="1">
    <location>
        <begin position="31"/>
        <end position="51"/>
    </location>
</feature>
<feature type="transmembrane region" description="Helical" evidence="1">
    <location>
        <begin position="60"/>
        <end position="80"/>
    </location>
</feature>
<feature type="transmembrane region" description="Helical" evidence="1">
    <location>
        <begin position="86"/>
        <end position="106"/>
    </location>
</feature>
<organism>
    <name type="scientific">Staphylococcus aureus (strain bovine RF122 / ET3-1)</name>
    <dbReference type="NCBI Taxonomy" id="273036"/>
    <lineage>
        <taxon>Bacteria</taxon>
        <taxon>Bacillati</taxon>
        <taxon>Bacillota</taxon>
        <taxon>Bacilli</taxon>
        <taxon>Bacillales</taxon>
        <taxon>Staphylococcaceae</taxon>
        <taxon>Staphylococcus</taxon>
    </lineage>
</organism>
<accession>Q2YYZ8</accession>
<sequence length="108" mass="11774">MLYPIFIFILAGLCEIGGGYLIWLWLREGQCSLVGLIGGAILMLYGVIATFQSFPSFGRVYAAYGGVFIIMSLIFAMVVDKQMPDKYDVIGAIICIVGVLVMLLPSRA</sequence>
<gene>
    <name type="ordered locus">SAB2216c</name>
</gene>
<evidence type="ECO:0000255" key="1">
    <source>
        <dbReference type="HAMAP-Rule" id="MF_00010"/>
    </source>
</evidence>
<keyword id="KW-1003">Cell membrane</keyword>
<keyword id="KW-0472">Membrane</keyword>
<keyword id="KW-0812">Transmembrane</keyword>
<keyword id="KW-1133">Transmembrane helix</keyword>
<comment type="subcellular location">
    <subcellularLocation>
        <location evidence="1">Cell membrane</location>
        <topology evidence="1">Multi-pass membrane protein</topology>
    </subcellularLocation>
</comment>
<comment type="similarity">
    <text evidence="1">Belongs to the UPF0060 family.</text>
</comment>